<sequence length="94" mass="10416">MLKPIGNRVIIEKKEQEQTTKSGIVLTDSAKEKSNEGVIVAVGTGRLLNDGTRVTPEVKEGDRVVFQQYAGTEVKRDNETYLVLNEEDILAVIE</sequence>
<reference key="1">
    <citation type="journal article" date="2002" name="Lancet">
        <title>Genome and virulence determinants of high virulence community-acquired MRSA.</title>
        <authorList>
            <person name="Baba T."/>
            <person name="Takeuchi F."/>
            <person name="Kuroda M."/>
            <person name="Yuzawa H."/>
            <person name="Aoki K."/>
            <person name="Oguchi A."/>
            <person name="Nagai Y."/>
            <person name="Iwama N."/>
            <person name="Asano K."/>
            <person name="Naimi T."/>
            <person name="Kuroda H."/>
            <person name="Cui L."/>
            <person name="Yamamoto K."/>
            <person name="Hiramatsu K."/>
        </authorList>
    </citation>
    <scope>NUCLEOTIDE SEQUENCE [LARGE SCALE GENOMIC DNA]</scope>
    <source>
        <strain>MW2</strain>
    </source>
</reference>
<organism>
    <name type="scientific">Staphylococcus aureus (strain MW2)</name>
    <dbReference type="NCBI Taxonomy" id="196620"/>
    <lineage>
        <taxon>Bacteria</taxon>
        <taxon>Bacillati</taxon>
        <taxon>Bacillota</taxon>
        <taxon>Bacilli</taxon>
        <taxon>Bacillales</taxon>
        <taxon>Staphylococcaceae</taxon>
        <taxon>Staphylococcus</taxon>
    </lineage>
</organism>
<name>CH10_STAAW</name>
<dbReference type="EMBL" id="BA000033">
    <property type="protein sequence ID" value="BAB95819.1"/>
    <property type="molecule type" value="Genomic_DNA"/>
</dbReference>
<dbReference type="RefSeq" id="WP_000917289.1">
    <property type="nucleotide sequence ID" value="NC_003923.1"/>
</dbReference>
<dbReference type="SMR" id="P0A013"/>
<dbReference type="GeneID" id="98346332"/>
<dbReference type="KEGG" id="sam:MW1954"/>
<dbReference type="HOGENOM" id="CLU_132825_2_1_9"/>
<dbReference type="GO" id="GO:0005737">
    <property type="term" value="C:cytoplasm"/>
    <property type="evidence" value="ECO:0007669"/>
    <property type="project" value="UniProtKB-SubCell"/>
</dbReference>
<dbReference type="GO" id="GO:0005524">
    <property type="term" value="F:ATP binding"/>
    <property type="evidence" value="ECO:0007669"/>
    <property type="project" value="InterPro"/>
</dbReference>
<dbReference type="GO" id="GO:0046872">
    <property type="term" value="F:metal ion binding"/>
    <property type="evidence" value="ECO:0007669"/>
    <property type="project" value="TreeGrafter"/>
</dbReference>
<dbReference type="GO" id="GO:0044183">
    <property type="term" value="F:protein folding chaperone"/>
    <property type="evidence" value="ECO:0007669"/>
    <property type="project" value="InterPro"/>
</dbReference>
<dbReference type="GO" id="GO:0051087">
    <property type="term" value="F:protein-folding chaperone binding"/>
    <property type="evidence" value="ECO:0007669"/>
    <property type="project" value="TreeGrafter"/>
</dbReference>
<dbReference type="GO" id="GO:0051082">
    <property type="term" value="F:unfolded protein binding"/>
    <property type="evidence" value="ECO:0007669"/>
    <property type="project" value="TreeGrafter"/>
</dbReference>
<dbReference type="GO" id="GO:0051085">
    <property type="term" value="P:chaperone cofactor-dependent protein refolding"/>
    <property type="evidence" value="ECO:0007669"/>
    <property type="project" value="TreeGrafter"/>
</dbReference>
<dbReference type="CDD" id="cd00320">
    <property type="entry name" value="cpn10"/>
    <property type="match status" value="1"/>
</dbReference>
<dbReference type="FunFam" id="2.30.33.40:FF:000001">
    <property type="entry name" value="10 kDa chaperonin"/>
    <property type="match status" value="1"/>
</dbReference>
<dbReference type="Gene3D" id="2.30.33.40">
    <property type="entry name" value="GroES chaperonin"/>
    <property type="match status" value="1"/>
</dbReference>
<dbReference type="HAMAP" id="MF_00580">
    <property type="entry name" value="CH10"/>
    <property type="match status" value="1"/>
</dbReference>
<dbReference type="InterPro" id="IPR020818">
    <property type="entry name" value="Chaperonin_GroES"/>
</dbReference>
<dbReference type="InterPro" id="IPR037124">
    <property type="entry name" value="Chaperonin_GroES_sf"/>
</dbReference>
<dbReference type="InterPro" id="IPR018369">
    <property type="entry name" value="Chaprnonin_Cpn10_CS"/>
</dbReference>
<dbReference type="InterPro" id="IPR011032">
    <property type="entry name" value="GroES-like_sf"/>
</dbReference>
<dbReference type="NCBIfam" id="NF001531">
    <property type="entry name" value="PRK00364.2-2"/>
    <property type="match status" value="1"/>
</dbReference>
<dbReference type="NCBIfam" id="NF001532">
    <property type="entry name" value="PRK00364.2-3"/>
    <property type="match status" value="1"/>
</dbReference>
<dbReference type="NCBIfam" id="NF001533">
    <property type="entry name" value="PRK00364.2-4"/>
    <property type="match status" value="1"/>
</dbReference>
<dbReference type="NCBIfam" id="NF001534">
    <property type="entry name" value="PRK00364.2-5"/>
    <property type="match status" value="1"/>
</dbReference>
<dbReference type="PANTHER" id="PTHR10772">
    <property type="entry name" value="10 KDA HEAT SHOCK PROTEIN"/>
    <property type="match status" value="1"/>
</dbReference>
<dbReference type="PANTHER" id="PTHR10772:SF58">
    <property type="entry name" value="CO-CHAPERONIN GROES"/>
    <property type="match status" value="1"/>
</dbReference>
<dbReference type="Pfam" id="PF00166">
    <property type="entry name" value="Cpn10"/>
    <property type="match status" value="1"/>
</dbReference>
<dbReference type="PRINTS" id="PR00297">
    <property type="entry name" value="CHAPERONIN10"/>
</dbReference>
<dbReference type="SMART" id="SM00883">
    <property type="entry name" value="Cpn10"/>
    <property type="match status" value="1"/>
</dbReference>
<dbReference type="SUPFAM" id="SSF50129">
    <property type="entry name" value="GroES-like"/>
    <property type="match status" value="1"/>
</dbReference>
<dbReference type="PROSITE" id="PS00681">
    <property type="entry name" value="CHAPERONINS_CPN10"/>
    <property type="match status" value="1"/>
</dbReference>
<proteinExistence type="inferred from homology"/>
<gene>
    <name evidence="1" type="primary">groES</name>
    <name evidence="1" type="synonym">groS</name>
    <name type="synonym">hsp10</name>
    <name type="ordered locus">MW1954</name>
</gene>
<feature type="chain" id="PRO_0000174844" description="Co-chaperonin GroES">
    <location>
        <begin position="1"/>
        <end position="94"/>
    </location>
</feature>
<accession>P0A013</accession>
<accession>Q08841</accession>
<protein>
    <recommendedName>
        <fullName evidence="1">Co-chaperonin GroES</fullName>
    </recommendedName>
    <alternativeName>
        <fullName evidence="1">10 kDa chaperonin</fullName>
    </alternativeName>
    <alternativeName>
        <fullName evidence="1">Chaperonin-10</fullName>
        <shortName evidence="1">Cpn10</shortName>
    </alternativeName>
    <alternativeName>
        <fullName>Heat shock protein 10</fullName>
    </alternativeName>
</protein>
<keyword id="KW-0143">Chaperone</keyword>
<keyword id="KW-0963">Cytoplasm</keyword>
<keyword id="KW-0346">Stress response</keyword>
<comment type="function">
    <text evidence="1">Together with the chaperonin GroEL, plays an essential role in assisting protein folding. The GroEL-GroES system forms a nano-cage that allows encapsulation of the non-native substrate proteins and provides a physical environment optimized to promote and accelerate protein folding. GroES binds to the apical surface of the GroEL ring, thereby capping the opening of the GroEL channel.</text>
</comment>
<comment type="subunit">
    <text evidence="1">Heptamer of 7 subunits arranged in a ring. Interacts with the chaperonin GroEL.</text>
</comment>
<comment type="subcellular location">
    <subcellularLocation>
        <location evidence="1">Cytoplasm</location>
    </subcellularLocation>
</comment>
<comment type="similarity">
    <text evidence="1 2">Belongs to the GroES chaperonin family.</text>
</comment>
<evidence type="ECO:0000255" key="1">
    <source>
        <dbReference type="HAMAP-Rule" id="MF_00580"/>
    </source>
</evidence>
<evidence type="ECO:0000305" key="2"/>